<comment type="function">
    <text evidence="1">Inhibits fibrinogen interaction with platelets. Acts by binding to alpha-IIb/beta-3 (ITGA2B/ITGB3) on the platelet surface and inhibits aggregation induced by ADP, thrombin, platelet-activating factor and collagen (By similarity).</text>
</comment>
<comment type="subunit">
    <text evidence="1">Monomer.</text>
</comment>
<comment type="subcellular location">
    <subcellularLocation>
        <location>Secreted</location>
    </subcellularLocation>
</comment>
<comment type="tissue specificity">
    <text>Expressed by the venom gland.</text>
</comment>
<comment type="miscellaneous">
    <text evidence="1">The disintegrin belongs to the medium disintegrin subfamily.</text>
</comment>
<comment type="similarity">
    <text evidence="3">Belongs to the venom metalloproteinase (M12B) family. P-II subfamily. P-IIa sub-subfamily.</text>
</comment>
<dbReference type="GO" id="GO:0005576">
    <property type="term" value="C:extracellular region"/>
    <property type="evidence" value="ECO:0007669"/>
    <property type="project" value="UniProtKB-SubCell"/>
</dbReference>
<dbReference type="GO" id="GO:0090729">
    <property type="term" value="F:toxin activity"/>
    <property type="evidence" value="ECO:0007669"/>
    <property type="project" value="UniProtKB-KW"/>
</dbReference>
<dbReference type="Gene3D" id="4.10.70.10">
    <property type="entry name" value="Disintegrin domain"/>
    <property type="match status" value="1"/>
</dbReference>
<dbReference type="InterPro" id="IPR036436">
    <property type="entry name" value="Disintegrin_dom_sf"/>
</dbReference>
<feature type="chain" id="PRO_0000428814" description="Disintegrin">
    <location>
        <begin position="1"/>
        <end position="20" status="greater than"/>
    </location>
</feature>
<feature type="domain" description="Disintegrin" evidence="2">
    <location>
        <begin position="1"/>
        <end position="20" status="greater than"/>
    </location>
</feature>
<feature type="disulfide bond" evidence="2">
    <location>
        <begin position="6"/>
        <end position="15"/>
    </location>
</feature>
<feature type="disulfide bond" evidence="2">
    <location>
        <begin position="8"/>
        <end position="16"/>
    </location>
</feature>
<feature type="non-terminal residue">
    <location>
        <position position="20"/>
    </location>
</feature>
<organism>
    <name type="scientific">Bothrops fonsecai</name>
    <name type="common">Fonseca's lancehead</name>
    <name type="synonym">Rhinocerophis fonsecai</name>
    <dbReference type="NCBI Taxonomy" id="157549"/>
    <lineage>
        <taxon>Eukaryota</taxon>
        <taxon>Metazoa</taxon>
        <taxon>Chordata</taxon>
        <taxon>Craniata</taxon>
        <taxon>Vertebrata</taxon>
        <taxon>Euteleostomi</taxon>
        <taxon>Lepidosauria</taxon>
        <taxon>Squamata</taxon>
        <taxon>Bifurcata</taxon>
        <taxon>Unidentata</taxon>
        <taxon>Episquamata</taxon>
        <taxon>Toxicofera</taxon>
        <taxon>Serpentes</taxon>
        <taxon>Colubroidea</taxon>
        <taxon>Viperidae</taxon>
        <taxon>Crotalinae</taxon>
        <taxon>Bothrops</taxon>
    </lineage>
</organism>
<sequence>EAGEECDCGTPENPCCDAAT</sequence>
<protein>
    <recommendedName>
        <fullName>Disintegrin</fullName>
    </recommendedName>
    <alternativeName>
        <fullName>Platelet aggregation activation inhibitor</fullName>
    </alternativeName>
</protein>
<keyword id="KW-1217">Cell adhesion impairing toxin</keyword>
<keyword id="KW-0903">Direct protein sequencing</keyword>
<keyword id="KW-1015">Disulfide bond</keyword>
<keyword id="KW-1199">Hemostasis impairing toxin</keyword>
<keyword id="KW-1201">Platelet aggregation inhibiting toxin</keyword>
<keyword id="KW-0964">Secreted</keyword>
<keyword id="KW-0800">Toxin</keyword>
<proteinExistence type="evidence at protein level"/>
<accession>P0DMH4</accession>
<name>VM2_BOTFO</name>
<evidence type="ECO:0000250" key="1"/>
<evidence type="ECO:0000255" key="2">
    <source>
        <dbReference type="PROSITE-ProRule" id="PRU00068"/>
    </source>
</evidence>
<evidence type="ECO:0000305" key="3"/>
<reference key="1">
    <citation type="journal article" date="2008" name="J. Proteomics">
        <title>Snake venomics of the Brazilian pitvipers Bothrops cotiara and Bothrops fonsecai. Identification of taxonomy markers.</title>
        <authorList>
            <person name="Tashima A.K."/>
            <person name="Sanz L."/>
            <person name="Camargo A.C."/>
            <person name="Serrano S.M."/>
            <person name="Calvete J.J."/>
        </authorList>
    </citation>
    <scope>PROTEIN SEQUENCE</scope>
    <source>
        <tissue>Venom</tissue>
    </source>
</reference>